<organism>
    <name type="scientific">Ralstonia nicotianae (strain ATCC BAA-1114 / GMI1000)</name>
    <name type="common">Ralstonia solanacearum</name>
    <dbReference type="NCBI Taxonomy" id="267608"/>
    <lineage>
        <taxon>Bacteria</taxon>
        <taxon>Pseudomonadati</taxon>
        <taxon>Pseudomonadota</taxon>
        <taxon>Betaproteobacteria</taxon>
        <taxon>Burkholderiales</taxon>
        <taxon>Burkholderiaceae</taxon>
        <taxon>Ralstonia</taxon>
        <taxon>Ralstonia solanacearum species complex</taxon>
    </lineage>
</organism>
<keyword id="KW-0963">Cytoplasm</keyword>
<keyword id="KW-0255">Endonuclease</keyword>
<keyword id="KW-0378">Hydrolase</keyword>
<keyword id="KW-0464">Manganese</keyword>
<keyword id="KW-0479">Metal-binding</keyword>
<keyword id="KW-0540">Nuclease</keyword>
<keyword id="KW-1185">Reference proteome</keyword>
<feature type="chain" id="PRO_0000111608" description="Ribonuclease HII">
    <location>
        <begin position="1"/>
        <end position="236"/>
    </location>
</feature>
<feature type="domain" description="RNase H type-2" evidence="2">
    <location>
        <begin position="27"/>
        <end position="219"/>
    </location>
</feature>
<feature type="region of interest" description="Disordered" evidence="3">
    <location>
        <begin position="212"/>
        <end position="236"/>
    </location>
</feature>
<feature type="binding site" evidence="1">
    <location>
        <position position="33"/>
    </location>
    <ligand>
        <name>a divalent metal cation</name>
        <dbReference type="ChEBI" id="CHEBI:60240"/>
    </ligand>
</feature>
<feature type="binding site" evidence="1">
    <location>
        <position position="34"/>
    </location>
    <ligand>
        <name>a divalent metal cation</name>
        <dbReference type="ChEBI" id="CHEBI:60240"/>
    </ligand>
</feature>
<feature type="binding site" evidence="1">
    <location>
        <position position="128"/>
    </location>
    <ligand>
        <name>a divalent metal cation</name>
        <dbReference type="ChEBI" id="CHEBI:60240"/>
    </ligand>
</feature>
<evidence type="ECO:0000255" key="1">
    <source>
        <dbReference type="HAMAP-Rule" id="MF_00052"/>
    </source>
</evidence>
<evidence type="ECO:0000255" key="2">
    <source>
        <dbReference type="PROSITE-ProRule" id="PRU01319"/>
    </source>
</evidence>
<evidence type="ECO:0000256" key="3">
    <source>
        <dbReference type="SAM" id="MobiDB-lite"/>
    </source>
</evidence>
<protein>
    <recommendedName>
        <fullName evidence="1">Ribonuclease HII</fullName>
        <shortName evidence="1">RNase HII</shortName>
        <ecNumber evidence="1">3.1.26.4</ecNumber>
    </recommendedName>
</protein>
<comment type="function">
    <text evidence="1">Endonuclease that specifically degrades the RNA of RNA-DNA hybrids.</text>
</comment>
<comment type="catalytic activity">
    <reaction evidence="1">
        <text>Endonucleolytic cleavage to 5'-phosphomonoester.</text>
        <dbReference type="EC" id="3.1.26.4"/>
    </reaction>
</comment>
<comment type="cofactor">
    <cofactor evidence="1">
        <name>Mn(2+)</name>
        <dbReference type="ChEBI" id="CHEBI:29035"/>
    </cofactor>
    <cofactor evidence="1">
        <name>Mg(2+)</name>
        <dbReference type="ChEBI" id="CHEBI:18420"/>
    </cofactor>
    <text evidence="1">Manganese or magnesium. Binds 1 divalent metal ion per monomer in the absence of substrate. May bind a second metal ion after substrate binding.</text>
</comment>
<comment type="subcellular location">
    <subcellularLocation>
        <location evidence="1">Cytoplasm</location>
    </subcellularLocation>
</comment>
<comment type="similarity">
    <text evidence="1">Belongs to the RNase HII family.</text>
</comment>
<reference key="1">
    <citation type="journal article" date="2002" name="Nature">
        <title>Genome sequence of the plant pathogen Ralstonia solanacearum.</title>
        <authorList>
            <person name="Salanoubat M."/>
            <person name="Genin S."/>
            <person name="Artiguenave F."/>
            <person name="Gouzy J."/>
            <person name="Mangenot S."/>
            <person name="Arlat M."/>
            <person name="Billault A."/>
            <person name="Brottier P."/>
            <person name="Camus J.-C."/>
            <person name="Cattolico L."/>
            <person name="Chandler M."/>
            <person name="Choisne N."/>
            <person name="Claudel-Renard C."/>
            <person name="Cunnac S."/>
            <person name="Demange N."/>
            <person name="Gaspin C."/>
            <person name="Lavie M."/>
            <person name="Moisan A."/>
            <person name="Robert C."/>
            <person name="Saurin W."/>
            <person name="Schiex T."/>
            <person name="Siguier P."/>
            <person name="Thebault P."/>
            <person name="Whalen M."/>
            <person name="Wincker P."/>
            <person name="Levy M."/>
            <person name="Weissenbach J."/>
            <person name="Boucher C.A."/>
        </authorList>
    </citation>
    <scope>NUCLEOTIDE SEQUENCE [LARGE SCALE GENOMIC DNA]</scope>
    <source>
        <strain>ATCC BAA-1114 / GMI1000</strain>
    </source>
</reference>
<sequence>MTADSTEIPQLALPLSQSPAAGKRARRILCGVDEAGRGPLAGPVTAAAVVLNPRKPIQGLADSKVLTAKKREALYDEIVEKALAWHVAEATVEEIDRINILHATMLAMQRAVQGVAAQGVLPDLVQVDGNRCPQVAFAVEAIVKGDALVPAISAASILAKVTRDRQLAALHIAFPQYGFDVHAGYGTPQHLAAIERHGVTPHHRRSFAPVRRALDGAPPPAGDAVPQTDAKTAWAD</sequence>
<dbReference type="EC" id="3.1.26.4" evidence="1"/>
<dbReference type="EMBL" id="AL646052">
    <property type="protein sequence ID" value="CAD15120.1"/>
    <property type="molecule type" value="Genomic_DNA"/>
</dbReference>
<dbReference type="RefSeq" id="WP_011001367.1">
    <property type="nucleotide sequence ID" value="NC_003295.1"/>
</dbReference>
<dbReference type="SMR" id="Q8XZH7"/>
<dbReference type="STRING" id="267608.RSc1418"/>
<dbReference type="EnsemblBacteria" id="CAD15120">
    <property type="protein sequence ID" value="CAD15120"/>
    <property type="gene ID" value="RSc1418"/>
</dbReference>
<dbReference type="KEGG" id="rso:RSc1418"/>
<dbReference type="eggNOG" id="COG0164">
    <property type="taxonomic scope" value="Bacteria"/>
</dbReference>
<dbReference type="HOGENOM" id="CLU_036532_3_2_4"/>
<dbReference type="Proteomes" id="UP000001436">
    <property type="component" value="Chromosome"/>
</dbReference>
<dbReference type="GO" id="GO:0005737">
    <property type="term" value="C:cytoplasm"/>
    <property type="evidence" value="ECO:0007669"/>
    <property type="project" value="UniProtKB-SubCell"/>
</dbReference>
<dbReference type="GO" id="GO:0032299">
    <property type="term" value="C:ribonuclease H2 complex"/>
    <property type="evidence" value="ECO:0007669"/>
    <property type="project" value="TreeGrafter"/>
</dbReference>
<dbReference type="GO" id="GO:0030145">
    <property type="term" value="F:manganese ion binding"/>
    <property type="evidence" value="ECO:0007669"/>
    <property type="project" value="UniProtKB-UniRule"/>
</dbReference>
<dbReference type="GO" id="GO:0003723">
    <property type="term" value="F:RNA binding"/>
    <property type="evidence" value="ECO:0007669"/>
    <property type="project" value="InterPro"/>
</dbReference>
<dbReference type="GO" id="GO:0004523">
    <property type="term" value="F:RNA-DNA hybrid ribonuclease activity"/>
    <property type="evidence" value="ECO:0007669"/>
    <property type="project" value="UniProtKB-UniRule"/>
</dbReference>
<dbReference type="GO" id="GO:0043137">
    <property type="term" value="P:DNA replication, removal of RNA primer"/>
    <property type="evidence" value="ECO:0007669"/>
    <property type="project" value="TreeGrafter"/>
</dbReference>
<dbReference type="GO" id="GO:0006298">
    <property type="term" value="P:mismatch repair"/>
    <property type="evidence" value="ECO:0007669"/>
    <property type="project" value="TreeGrafter"/>
</dbReference>
<dbReference type="CDD" id="cd07182">
    <property type="entry name" value="RNase_HII_bacteria_HII_like"/>
    <property type="match status" value="1"/>
</dbReference>
<dbReference type="FunFam" id="3.30.420.10:FF:000006">
    <property type="entry name" value="Ribonuclease HII"/>
    <property type="match status" value="1"/>
</dbReference>
<dbReference type="Gene3D" id="3.30.420.10">
    <property type="entry name" value="Ribonuclease H-like superfamily/Ribonuclease H"/>
    <property type="match status" value="1"/>
</dbReference>
<dbReference type="HAMAP" id="MF_00052_B">
    <property type="entry name" value="RNase_HII_B"/>
    <property type="match status" value="1"/>
</dbReference>
<dbReference type="InterPro" id="IPR022898">
    <property type="entry name" value="RNase_HII"/>
</dbReference>
<dbReference type="InterPro" id="IPR001352">
    <property type="entry name" value="RNase_HII/HIII"/>
</dbReference>
<dbReference type="InterPro" id="IPR024567">
    <property type="entry name" value="RNase_HII/HIII_dom"/>
</dbReference>
<dbReference type="InterPro" id="IPR012337">
    <property type="entry name" value="RNaseH-like_sf"/>
</dbReference>
<dbReference type="InterPro" id="IPR036397">
    <property type="entry name" value="RNaseH_sf"/>
</dbReference>
<dbReference type="NCBIfam" id="NF000595">
    <property type="entry name" value="PRK00015.1-3"/>
    <property type="match status" value="1"/>
</dbReference>
<dbReference type="NCBIfam" id="NF000596">
    <property type="entry name" value="PRK00015.1-4"/>
    <property type="match status" value="1"/>
</dbReference>
<dbReference type="PANTHER" id="PTHR10954">
    <property type="entry name" value="RIBONUCLEASE H2 SUBUNIT A"/>
    <property type="match status" value="1"/>
</dbReference>
<dbReference type="PANTHER" id="PTHR10954:SF18">
    <property type="entry name" value="RIBONUCLEASE HII"/>
    <property type="match status" value="1"/>
</dbReference>
<dbReference type="Pfam" id="PF01351">
    <property type="entry name" value="RNase_HII"/>
    <property type="match status" value="1"/>
</dbReference>
<dbReference type="SUPFAM" id="SSF53098">
    <property type="entry name" value="Ribonuclease H-like"/>
    <property type="match status" value="1"/>
</dbReference>
<dbReference type="PROSITE" id="PS51975">
    <property type="entry name" value="RNASE_H_2"/>
    <property type="match status" value="1"/>
</dbReference>
<proteinExistence type="inferred from homology"/>
<name>RNH2_RALN1</name>
<gene>
    <name evidence="1" type="primary">rnhB</name>
    <name type="ordered locus">RSc1418</name>
    <name type="ORF">RS05274</name>
</gene>
<accession>Q8XZH7</accession>